<evidence type="ECO:0000250" key="1"/>
<evidence type="ECO:0000255" key="2">
    <source>
        <dbReference type="PROSITE-ProRule" id="PRU00159"/>
    </source>
</evidence>
<evidence type="ECO:0000255" key="3">
    <source>
        <dbReference type="PROSITE-ProRule" id="PRU10027"/>
    </source>
</evidence>
<evidence type="ECO:0000269" key="4">
    <source>
    </source>
</evidence>
<evidence type="ECO:0000269" key="5">
    <source>
    </source>
</evidence>
<evidence type="ECO:0000303" key="6">
    <source>
    </source>
</evidence>
<evidence type="ECO:0000303" key="7">
    <source>
    </source>
</evidence>
<evidence type="ECO:0000303" key="8">
    <source>
    </source>
</evidence>
<evidence type="ECO:0000305" key="9"/>
<reference key="1">
    <citation type="journal article" date="2001" name="Nat. Genet.">
        <title>A gene encoding a putative GTPase regulator is mutated in familial amyotrophic lateral sclerosis 2.</title>
        <authorList>
            <person name="Hadano S."/>
            <person name="Hand C.K."/>
            <person name="Osuga H."/>
            <person name="Yanagisawa Y."/>
            <person name="Otomo A."/>
            <person name="Devon R.S."/>
            <person name="Miyamoto N."/>
            <person name="Showguchi-Miyata J."/>
            <person name="Okada Y."/>
            <person name="Singaraja R."/>
            <person name="Figlewicz D.A."/>
            <person name="Kwiatkowski T."/>
            <person name="Hosler B.A."/>
            <person name="Sagie T."/>
            <person name="Skaug J."/>
            <person name="Nasir J."/>
            <person name="Brown R.H. Jr."/>
            <person name="Scherer S.W."/>
            <person name="Rouleau G.A."/>
            <person name="Hayden M.R."/>
            <person name="Ikeda J.-E."/>
        </authorList>
    </citation>
    <scope>NUCLEOTIDE SEQUENCE [MRNA] (ISOFORM 4)</scope>
    <source>
        <tissue>Testis</tissue>
    </source>
</reference>
<reference key="2">
    <citation type="journal article" date="2004" name="Nat. Genet.">
        <title>Complete sequencing and characterization of 21,243 full-length human cDNAs.</title>
        <authorList>
            <person name="Ota T."/>
            <person name="Suzuki Y."/>
            <person name="Nishikawa T."/>
            <person name="Otsuki T."/>
            <person name="Sugiyama T."/>
            <person name="Irie R."/>
            <person name="Wakamatsu A."/>
            <person name="Hayashi K."/>
            <person name="Sato H."/>
            <person name="Nagai K."/>
            <person name="Kimura K."/>
            <person name="Makita H."/>
            <person name="Sekine M."/>
            <person name="Obayashi M."/>
            <person name="Nishi T."/>
            <person name="Shibahara T."/>
            <person name="Tanaka T."/>
            <person name="Ishii S."/>
            <person name="Yamamoto J."/>
            <person name="Saito K."/>
            <person name="Kawai Y."/>
            <person name="Isono Y."/>
            <person name="Nakamura Y."/>
            <person name="Nagahari K."/>
            <person name="Murakami K."/>
            <person name="Yasuda T."/>
            <person name="Iwayanagi T."/>
            <person name="Wagatsuma M."/>
            <person name="Shiratori A."/>
            <person name="Sudo H."/>
            <person name="Hosoiri T."/>
            <person name="Kaku Y."/>
            <person name="Kodaira H."/>
            <person name="Kondo H."/>
            <person name="Sugawara M."/>
            <person name="Takahashi M."/>
            <person name="Kanda K."/>
            <person name="Yokoi T."/>
            <person name="Furuya T."/>
            <person name="Kikkawa E."/>
            <person name="Omura Y."/>
            <person name="Abe K."/>
            <person name="Kamihara K."/>
            <person name="Katsuta N."/>
            <person name="Sato K."/>
            <person name="Tanikawa M."/>
            <person name="Yamazaki M."/>
            <person name="Ninomiya K."/>
            <person name="Ishibashi T."/>
            <person name="Yamashita H."/>
            <person name="Murakawa K."/>
            <person name="Fujimori K."/>
            <person name="Tanai H."/>
            <person name="Kimata M."/>
            <person name="Watanabe M."/>
            <person name="Hiraoka S."/>
            <person name="Chiba Y."/>
            <person name="Ishida S."/>
            <person name="Ono Y."/>
            <person name="Takiguchi S."/>
            <person name="Watanabe S."/>
            <person name="Yosida M."/>
            <person name="Hotuta T."/>
            <person name="Kusano J."/>
            <person name="Kanehori K."/>
            <person name="Takahashi-Fujii A."/>
            <person name="Hara H."/>
            <person name="Tanase T.-O."/>
            <person name="Nomura Y."/>
            <person name="Togiya S."/>
            <person name="Komai F."/>
            <person name="Hara R."/>
            <person name="Takeuchi K."/>
            <person name="Arita M."/>
            <person name="Imose N."/>
            <person name="Musashino K."/>
            <person name="Yuuki H."/>
            <person name="Oshima A."/>
            <person name="Sasaki N."/>
            <person name="Aotsuka S."/>
            <person name="Yoshikawa Y."/>
            <person name="Matsunawa H."/>
            <person name="Ichihara T."/>
            <person name="Shiohata N."/>
            <person name="Sano S."/>
            <person name="Moriya S."/>
            <person name="Momiyama H."/>
            <person name="Satoh N."/>
            <person name="Takami S."/>
            <person name="Terashima Y."/>
            <person name="Suzuki O."/>
            <person name="Nakagawa S."/>
            <person name="Senoh A."/>
            <person name="Mizoguchi H."/>
            <person name="Goto Y."/>
            <person name="Shimizu F."/>
            <person name="Wakebe H."/>
            <person name="Hishigaki H."/>
            <person name="Watanabe T."/>
            <person name="Sugiyama A."/>
            <person name="Takemoto M."/>
            <person name="Kawakami B."/>
            <person name="Yamazaki M."/>
            <person name="Watanabe K."/>
            <person name="Kumagai A."/>
            <person name="Itakura S."/>
            <person name="Fukuzumi Y."/>
            <person name="Fujimori Y."/>
            <person name="Komiyama M."/>
            <person name="Tashiro H."/>
            <person name="Tanigami A."/>
            <person name="Fujiwara T."/>
            <person name="Ono T."/>
            <person name="Yamada K."/>
            <person name="Fujii Y."/>
            <person name="Ozaki K."/>
            <person name="Hirao M."/>
            <person name="Ohmori Y."/>
            <person name="Kawabata A."/>
            <person name="Hikiji T."/>
            <person name="Kobatake N."/>
            <person name="Inagaki H."/>
            <person name="Ikema Y."/>
            <person name="Okamoto S."/>
            <person name="Okitani R."/>
            <person name="Kawakami T."/>
            <person name="Noguchi S."/>
            <person name="Itoh T."/>
            <person name="Shigeta K."/>
            <person name="Senba T."/>
            <person name="Matsumura K."/>
            <person name="Nakajima Y."/>
            <person name="Mizuno T."/>
            <person name="Morinaga M."/>
            <person name="Sasaki M."/>
            <person name="Togashi T."/>
            <person name="Oyama M."/>
            <person name="Hata H."/>
            <person name="Watanabe M."/>
            <person name="Komatsu T."/>
            <person name="Mizushima-Sugano J."/>
            <person name="Satoh T."/>
            <person name="Shirai Y."/>
            <person name="Takahashi Y."/>
            <person name="Nakagawa K."/>
            <person name="Okumura K."/>
            <person name="Nagase T."/>
            <person name="Nomura N."/>
            <person name="Kikuchi H."/>
            <person name="Masuho Y."/>
            <person name="Yamashita R."/>
            <person name="Nakai K."/>
            <person name="Yada T."/>
            <person name="Nakamura Y."/>
            <person name="Ohara O."/>
            <person name="Isogai T."/>
            <person name="Sugano S."/>
        </authorList>
    </citation>
    <scope>NUCLEOTIDE SEQUENCE [LARGE SCALE MRNA] (ISOFORMS 4 AND 6)</scope>
    <source>
        <tissue>Glial tumor</tissue>
        <tissue>Testis</tissue>
    </source>
</reference>
<reference key="3">
    <citation type="journal article" date="2005" name="Nature">
        <title>Generation and annotation of the DNA sequences of human chromosomes 2 and 4.</title>
        <authorList>
            <person name="Hillier L.W."/>
            <person name="Graves T.A."/>
            <person name="Fulton R.S."/>
            <person name="Fulton L.A."/>
            <person name="Pepin K.H."/>
            <person name="Minx P."/>
            <person name="Wagner-McPherson C."/>
            <person name="Layman D."/>
            <person name="Wylie K."/>
            <person name="Sekhon M."/>
            <person name="Becker M.C."/>
            <person name="Fewell G.A."/>
            <person name="Delehaunty K.D."/>
            <person name="Miner T.L."/>
            <person name="Nash W.E."/>
            <person name="Kremitzki C."/>
            <person name="Oddy L."/>
            <person name="Du H."/>
            <person name="Sun H."/>
            <person name="Bradshaw-Cordum H."/>
            <person name="Ali J."/>
            <person name="Carter J."/>
            <person name="Cordes M."/>
            <person name="Harris A."/>
            <person name="Isak A."/>
            <person name="van Brunt A."/>
            <person name="Nguyen C."/>
            <person name="Du F."/>
            <person name="Courtney L."/>
            <person name="Kalicki J."/>
            <person name="Ozersky P."/>
            <person name="Abbott S."/>
            <person name="Armstrong J."/>
            <person name="Belter E.A."/>
            <person name="Caruso L."/>
            <person name="Cedroni M."/>
            <person name="Cotton M."/>
            <person name="Davidson T."/>
            <person name="Desai A."/>
            <person name="Elliott G."/>
            <person name="Erb T."/>
            <person name="Fronick C."/>
            <person name="Gaige T."/>
            <person name="Haakenson W."/>
            <person name="Haglund K."/>
            <person name="Holmes A."/>
            <person name="Harkins R."/>
            <person name="Kim K."/>
            <person name="Kruchowski S.S."/>
            <person name="Strong C.M."/>
            <person name="Grewal N."/>
            <person name="Goyea E."/>
            <person name="Hou S."/>
            <person name="Levy A."/>
            <person name="Martinka S."/>
            <person name="Mead K."/>
            <person name="McLellan M.D."/>
            <person name="Meyer R."/>
            <person name="Randall-Maher J."/>
            <person name="Tomlinson C."/>
            <person name="Dauphin-Kohlberg S."/>
            <person name="Kozlowicz-Reilly A."/>
            <person name="Shah N."/>
            <person name="Swearengen-Shahid S."/>
            <person name="Snider J."/>
            <person name="Strong J.T."/>
            <person name="Thompson J."/>
            <person name="Yoakum M."/>
            <person name="Leonard S."/>
            <person name="Pearman C."/>
            <person name="Trani L."/>
            <person name="Radionenko M."/>
            <person name="Waligorski J.E."/>
            <person name="Wang C."/>
            <person name="Rock S.M."/>
            <person name="Tin-Wollam A.-M."/>
            <person name="Maupin R."/>
            <person name="Latreille P."/>
            <person name="Wendl M.C."/>
            <person name="Yang S.-P."/>
            <person name="Pohl C."/>
            <person name="Wallis J.W."/>
            <person name="Spieth J."/>
            <person name="Bieri T.A."/>
            <person name="Berkowicz N."/>
            <person name="Nelson J.O."/>
            <person name="Osborne J."/>
            <person name="Ding L."/>
            <person name="Meyer R."/>
            <person name="Sabo A."/>
            <person name="Shotland Y."/>
            <person name="Sinha P."/>
            <person name="Wohldmann P.E."/>
            <person name="Cook L.L."/>
            <person name="Hickenbotham M.T."/>
            <person name="Eldred J."/>
            <person name="Williams D."/>
            <person name="Jones T.A."/>
            <person name="She X."/>
            <person name="Ciccarelli F.D."/>
            <person name="Izaurralde E."/>
            <person name="Taylor J."/>
            <person name="Schmutz J."/>
            <person name="Myers R.M."/>
            <person name="Cox D.R."/>
            <person name="Huang X."/>
            <person name="McPherson J.D."/>
            <person name="Mardis E.R."/>
            <person name="Clifton S.W."/>
            <person name="Warren W.C."/>
            <person name="Chinwalla A.T."/>
            <person name="Eddy S.R."/>
            <person name="Marra M.A."/>
            <person name="Ovcharenko I."/>
            <person name="Furey T.S."/>
            <person name="Miller W."/>
            <person name="Eichler E.E."/>
            <person name="Bork P."/>
            <person name="Suyama M."/>
            <person name="Torrents D."/>
            <person name="Waterston R.H."/>
            <person name="Wilson R.K."/>
        </authorList>
    </citation>
    <scope>NUCLEOTIDE SEQUENCE [LARGE SCALE GENOMIC DNA]</scope>
</reference>
<reference key="4">
    <citation type="submission" date="2005-07" db="EMBL/GenBank/DDBJ databases">
        <authorList>
            <person name="Mural R.J."/>
            <person name="Istrail S."/>
            <person name="Sutton G.G."/>
            <person name="Florea L."/>
            <person name="Halpern A.L."/>
            <person name="Mobarry C.M."/>
            <person name="Lippert R."/>
            <person name="Walenz B."/>
            <person name="Shatkay H."/>
            <person name="Dew I."/>
            <person name="Miller J.R."/>
            <person name="Flanigan M.J."/>
            <person name="Edwards N.J."/>
            <person name="Bolanos R."/>
            <person name="Fasulo D."/>
            <person name="Halldorsson B.V."/>
            <person name="Hannenhalli S."/>
            <person name="Turner R."/>
            <person name="Yooseph S."/>
            <person name="Lu F."/>
            <person name="Nusskern D.R."/>
            <person name="Shue B.C."/>
            <person name="Zheng X.H."/>
            <person name="Zhong F."/>
            <person name="Delcher A.L."/>
            <person name="Huson D.H."/>
            <person name="Kravitz S.A."/>
            <person name="Mouchard L."/>
            <person name="Reinert K."/>
            <person name="Remington K.A."/>
            <person name="Clark A.G."/>
            <person name="Waterman M.S."/>
            <person name="Eichler E.E."/>
            <person name="Adams M.D."/>
            <person name="Hunkapiller M.W."/>
            <person name="Myers E.W."/>
            <person name="Venter J.C."/>
        </authorList>
    </citation>
    <scope>NUCLEOTIDE SEQUENCE [LARGE SCALE GENOMIC DNA]</scope>
</reference>
<reference key="5">
    <citation type="journal article" date="2004" name="Genome Res.">
        <title>The status, quality, and expansion of the NIH full-length cDNA project: the Mammalian Gene Collection (MGC).</title>
        <authorList>
            <consortium name="The MGC Project Team"/>
        </authorList>
    </citation>
    <scope>NUCLEOTIDE SEQUENCE [LARGE SCALE MRNA] (ISOFORM 3)</scope>
    <source>
        <tissue>Brain</tissue>
    </source>
</reference>
<reference key="6">
    <citation type="journal article" date="2002" name="Science">
        <title>The protein kinase complement of the human genome.</title>
        <authorList>
            <person name="Manning G."/>
            <person name="Whyte D.B."/>
            <person name="Martinez R."/>
            <person name="Hunter T."/>
            <person name="Sudarsanam S."/>
        </authorList>
    </citation>
    <scope>NOMENCLATURE</scope>
</reference>
<reference key="7">
    <citation type="journal article" date="2007" name="Nature">
        <title>Patterns of somatic mutation in human cancer genomes.</title>
        <authorList>
            <person name="Greenman C."/>
            <person name="Stephens P."/>
            <person name="Smith R."/>
            <person name="Dalgliesh G.L."/>
            <person name="Hunter C."/>
            <person name="Bignell G."/>
            <person name="Davies H."/>
            <person name="Teague J."/>
            <person name="Butler A."/>
            <person name="Stevens C."/>
            <person name="Edkins S."/>
            <person name="O'Meara S."/>
            <person name="Vastrik I."/>
            <person name="Schmidt E.E."/>
            <person name="Avis T."/>
            <person name="Barthorpe S."/>
            <person name="Bhamra G."/>
            <person name="Buck G."/>
            <person name="Choudhury B."/>
            <person name="Clements J."/>
            <person name="Cole J."/>
            <person name="Dicks E."/>
            <person name="Forbes S."/>
            <person name="Gray K."/>
            <person name="Halliday K."/>
            <person name="Harrison R."/>
            <person name="Hills K."/>
            <person name="Hinton J."/>
            <person name="Jenkinson A."/>
            <person name="Jones D."/>
            <person name="Menzies A."/>
            <person name="Mironenko T."/>
            <person name="Perry J."/>
            <person name="Raine K."/>
            <person name="Richardson D."/>
            <person name="Shepherd R."/>
            <person name="Small A."/>
            <person name="Tofts C."/>
            <person name="Varian J."/>
            <person name="Webb T."/>
            <person name="West S."/>
            <person name="Widaa S."/>
            <person name="Yates A."/>
            <person name="Cahill D.P."/>
            <person name="Louis D.N."/>
            <person name="Goldstraw P."/>
            <person name="Nicholson A.G."/>
            <person name="Brasseur F."/>
            <person name="Looijenga L."/>
            <person name="Weber B.L."/>
            <person name="Chiew Y.-E."/>
            <person name="DeFazio A."/>
            <person name="Greaves M.F."/>
            <person name="Green A.R."/>
            <person name="Campbell P."/>
            <person name="Birney E."/>
            <person name="Easton D.F."/>
            <person name="Chenevix-Trench G."/>
            <person name="Tan M.-H."/>
            <person name="Khoo S.K."/>
            <person name="Teh B.T."/>
            <person name="Yuen S.T."/>
            <person name="Leung S.Y."/>
            <person name="Wooster R."/>
            <person name="Futreal P.A."/>
            <person name="Stratton M.R."/>
        </authorList>
    </citation>
    <scope>VARIANTS [LARGE SCALE ANALYSIS] GLY-64; GLU-93; ARG-127; ILE-255 AND ASP-276</scope>
</reference>
<reference key="8">
    <citation type="journal article" date="2014" name="Biochem. Biophys. Res. Commun.">
        <title>ALS2CR7 (CDK15) attenuates TRAIL induced apoptosis by inducing phosphorylation of survivin Thr34.</title>
        <authorList>
            <person name="Park M.H."/>
            <person name="Kim S.Y."/>
            <person name="Kim Y.J."/>
            <person name="Chung Y.H."/>
        </authorList>
    </citation>
    <scope>FUNCTION</scope>
    <scope>CATALYTIC ACTIVITY</scope>
</reference>
<feature type="chain" id="PRO_0000085619" description="Cyclin-dependent kinase 15">
    <location>
        <begin position="1"/>
        <end position="435"/>
    </location>
</feature>
<feature type="domain" description="Protein kinase" evidence="2">
    <location>
        <begin position="103"/>
        <end position="387"/>
    </location>
</feature>
<feature type="active site" description="Proton acceptor" evidence="2 3">
    <location>
        <position position="224"/>
    </location>
</feature>
<feature type="binding site" evidence="2">
    <location>
        <begin position="109"/>
        <end position="117"/>
    </location>
    <ligand>
        <name>ATP</name>
        <dbReference type="ChEBI" id="CHEBI:30616"/>
    </ligand>
</feature>
<feature type="binding site" evidence="2">
    <location>
        <position position="132"/>
    </location>
    <ligand>
        <name>ATP</name>
        <dbReference type="ChEBI" id="CHEBI:30616"/>
    </ligand>
</feature>
<feature type="splice variant" id="VSP_038765" description="In isoform 4." evidence="6">
    <location>
        <begin position="1"/>
        <end position="51"/>
    </location>
</feature>
<feature type="splice variant" id="VSP_059406" description="In isoform 6." evidence="7">
    <location>
        <begin position="182"/>
        <end position="202"/>
    </location>
</feature>
<feature type="splice variant" id="VSP_059407" description="In isoform 6." evidence="7">
    <original>EWFPLPTPRSLHVVWNRLGRVPEAEDLASQ</original>
    <variation>GGSKKQHGWHTDIGQHRTAAMQPCSRNVSF</variation>
    <location>
        <begin position="337"/>
        <end position="366"/>
    </location>
</feature>
<feature type="splice variant" id="VSP_059408" description="In isoform 6." evidence="7">
    <location>
        <begin position="367"/>
        <end position="435"/>
    </location>
</feature>
<feature type="splice variant" id="VSP_047226" description="In isoform 5." evidence="9">
    <location>
        <begin position="400"/>
        <end position="405"/>
    </location>
</feature>
<feature type="splice variant" id="VSP_023745" description="In isoform 3." evidence="8">
    <location>
        <begin position="401"/>
        <end position="435"/>
    </location>
</feature>
<feature type="sequence variant" id="VAR_042016" description="In dbSNP:rs34776344." evidence="4">
    <original>R</original>
    <variation>G</variation>
    <location>
        <position position="64"/>
    </location>
</feature>
<feature type="sequence variant" id="VAR_042017" description="In a renal clear cell carcinoma sample; somatic mutation; dbSNP:rs1695586529." evidence="4">
    <original>K</original>
    <variation>E</variation>
    <location>
        <position position="93"/>
    </location>
</feature>
<feature type="sequence variant" id="VAR_042018" description="In dbSNP:rs56135556." evidence="4">
    <original>Q</original>
    <variation>R</variation>
    <location>
        <position position="127"/>
    </location>
</feature>
<feature type="sequence variant" id="VAR_042019" description="In dbSNP:rs34851370." evidence="4">
    <original>T</original>
    <variation>I</variation>
    <location>
        <position position="255"/>
    </location>
</feature>
<feature type="sequence variant" id="VAR_042020" description="In a breast infiltrating ductal carcinoma sample; somatic mutation; dbSNP:rs1490814436." evidence="4">
    <original>E</original>
    <variation>D</variation>
    <location>
        <position position="276"/>
    </location>
</feature>
<comment type="function">
    <text evidence="5">Serine/threonine-protein kinase that acts like an antiapoptotic protein that counters TRAIL/TNFSF10-induced apoptosis by inducing phosphorylation of BIRC5 at 'Thr-34'.</text>
</comment>
<comment type="catalytic activity">
    <reaction evidence="5">
        <text>L-seryl-[protein] + ATP = O-phospho-L-seryl-[protein] + ADP + H(+)</text>
        <dbReference type="Rhea" id="RHEA:17989"/>
        <dbReference type="Rhea" id="RHEA-COMP:9863"/>
        <dbReference type="Rhea" id="RHEA-COMP:11604"/>
        <dbReference type="ChEBI" id="CHEBI:15378"/>
        <dbReference type="ChEBI" id="CHEBI:29999"/>
        <dbReference type="ChEBI" id="CHEBI:30616"/>
        <dbReference type="ChEBI" id="CHEBI:83421"/>
        <dbReference type="ChEBI" id="CHEBI:456216"/>
        <dbReference type="EC" id="2.7.11.22"/>
    </reaction>
</comment>
<comment type="catalytic activity">
    <reaction evidence="5">
        <text>L-threonyl-[protein] + ATP = O-phospho-L-threonyl-[protein] + ADP + H(+)</text>
        <dbReference type="Rhea" id="RHEA:46608"/>
        <dbReference type="Rhea" id="RHEA-COMP:11060"/>
        <dbReference type="Rhea" id="RHEA-COMP:11605"/>
        <dbReference type="ChEBI" id="CHEBI:15378"/>
        <dbReference type="ChEBI" id="CHEBI:30013"/>
        <dbReference type="ChEBI" id="CHEBI:30616"/>
        <dbReference type="ChEBI" id="CHEBI:61977"/>
        <dbReference type="ChEBI" id="CHEBI:456216"/>
        <dbReference type="EC" id="2.7.11.22"/>
    </reaction>
</comment>
<comment type="cofactor">
    <cofactor evidence="1">
        <name>Mg(2+)</name>
        <dbReference type="ChEBI" id="CHEBI:18420"/>
    </cofactor>
</comment>
<comment type="interaction">
    <interactant intactId="EBI-1051975">
        <id>Q96Q40</id>
    </interactant>
    <interactant intactId="EBI-295634">
        <id>Q16543</id>
        <label>CDC37</label>
    </interactant>
    <organismsDiffer>false</organismsDiffer>
    <experiments>2</experiments>
</comment>
<comment type="interaction">
    <interactant intactId="EBI-1051975">
        <id>Q96Q40</id>
    </interactant>
    <interactant intactId="EBI-306914">
        <id>Q13451</id>
        <label>FKBP5</label>
    </interactant>
    <organismsDiffer>false</organismsDiffer>
    <experiments>5</experiments>
</comment>
<comment type="interaction">
    <interactant intactId="EBI-1051975">
        <id>Q96Q40</id>
    </interactant>
    <interactant intactId="EBI-296047">
        <id>P07900</id>
        <label>HSP90AA1</label>
    </interactant>
    <organismsDiffer>false</organismsDiffer>
    <experiments>3</experiments>
</comment>
<comment type="interaction">
    <interactant intactId="EBI-1051975">
        <id>Q96Q40</id>
    </interactant>
    <interactant intactId="EBI-352572">
        <id>P08238</id>
        <label>HSP90AB1</label>
    </interactant>
    <organismsDiffer>false</organismsDiffer>
    <experiments>2</experiments>
</comment>
<comment type="alternative products">
    <event type="alternative splicing"/>
    <isoform>
        <id>Q96Q40-1</id>
        <name>1</name>
        <sequence type="displayed"/>
    </isoform>
    <isoform>
        <id>Q96Q40-3</id>
        <name>3</name>
        <sequence type="described" ref="VSP_023745"/>
    </isoform>
    <isoform>
        <id>Q96Q40-4</id>
        <name>4</name>
        <sequence type="described" ref="VSP_038765"/>
    </isoform>
    <isoform>
        <id>Q96Q40-5</id>
        <name>5</name>
        <sequence type="described" ref="VSP_047226"/>
    </isoform>
    <isoform>
        <id>Q96Q40-6</id>
        <name>6</name>
        <sequence type="described" ref="VSP_059406 VSP_059407 VSP_059408"/>
    </isoform>
</comment>
<comment type="miscellaneous">
    <molecule>Isoform 5</molecule>
    <text evidence="9">May be due to competing acceptor splice site.</text>
</comment>
<comment type="similarity">
    <text evidence="9">Belongs to the protein kinase superfamily. CMGC Ser/Thr protein kinase family. CDC2/CDKX subfamily.</text>
</comment>
<comment type="sequence caution" evidence="9">
    <conflict type="erroneous initiation">
        <sequence resource="EMBL-CDS" id="AAH38807"/>
    </conflict>
    <text>Truncated N-terminus.</text>
</comment>
<sequence>MGQELCAKTVQPGCSCYHCSEGGEAHSCRRSQPETTEAAFKLTDLKEASCSMTSFHPRGLQAARAQKFKSKRPRSNSDCFQEEDLRQGFQWRKSLPFGAASSYLNLEKLGEGSYATVYKGISRINGQLVALKVISMNAEEGVPFTAIREASLLKGLKHANIVLLHDIIHTKETLTFVFEYMHTDLAQYMSQHPGGLHPHNVRLFMFQLLRGLAYIHHQHVLHRDLKPQNLLISHLGELKLADFGLARAKSIPSQTYSSEVVTLWYRPPDALLGATEYSSELDIWGAGCIFIEMFQGQPLFPGVSNILEQLEKIWEVLGVPTEDTWPGVSKLPNYNPEWFPLPTPRSLHVVWNRLGRVPEAEDLASQMLKGFPRDRVSAQEALVHDYFSALPSQLYQLPDEESLFTVSGVRLKPEMCDLLASYQKGHHPAQFSKCW</sequence>
<gene>
    <name type="primary">CDK15</name>
    <name type="synonym">ALS2CR7</name>
    <name type="synonym">PFTK2</name>
</gene>
<dbReference type="EC" id="2.7.11.22" evidence="5"/>
<dbReference type="EMBL" id="AB053308">
    <property type="protein sequence ID" value="BAB69017.1"/>
    <property type="molecule type" value="mRNA"/>
</dbReference>
<dbReference type="EMBL" id="AK131512">
    <property type="protein sequence ID" value="BAD18656.1"/>
    <property type="molecule type" value="mRNA"/>
</dbReference>
<dbReference type="EMBL" id="AK292434">
    <property type="protein sequence ID" value="BAF85123.1"/>
    <property type="molecule type" value="mRNA"/>
</dbReference>
<dbReference type="EMBL" id="AC007242">
    <property type="protein sequence ID" value="AAX93182.1"/>
    <property type="molecule type" value="Genomic_DNA"/>
</dbReference>
<dbReference type="EMBL" id="AC007358">
    <property type="protein sequence ID" value="AAX88914.1"/>
    <property type="molecule type" value="Genomic_DNA"/>
</dbReference>
<dbReference type="EMBL" id="CH471063">
    <property type="protein sequence ID" value="EAW70295.1"/>
    <property type="molecule type" value="Genomic_DNA"/>
</dbReference>
<dbReference type="EMBL" id="CH471063">
    <property type="protein sequence ID" value="EAW70297.1"/>
    <property type="molecule type" value="Genomic_DNA"/>
</dbReference>
<dbReference type="EMBL" id="BC038807">
    <property type="protein sequence ID" value="AAH38807.1"/>
    <property type="status" value="ALT_INIT"/>
    <property type="molecule type" value="mRNA"/>
</dbReference>
<dbReference type="CCDS" id="CCDS2350.1">
    <molecule id="Q96Q40-4"/>
</dbReference>
<dbReference type="CCDS" id="CCDS58746.1">
    <molecule id="Q96Q40-3"/>
</dbReference>
<dbReference type="CCDS" id="CCDS58747.1">
    <molecule id="Q96Q40-5"/>
</dbReference>
<dbReference type="CCDS" id="CCDS92927.1">
    <molecule id="Q96Q40-1"/>
</dbReference>
<dbReference type="RefSeq" id="NP_001248364.1">
    <molecule id="Q96Q40-5"/>
    <property type="nucleotide sequence ID" value="NM_001261435.1"/>
</dbReference>
<dbReference type="RefSeq" id="NP_001248365.1">
    <molecule id="Q96Q40-3"/>
    <property type="nucleotide sequence ID" value="NM_001261436.1"/>
</dbReference>
<dbReference type="RefSeq" id="NP_001353315.1">
    <molecule id="Q96Q40-1"/>
    <property type="nucleotide sequence ID" value="NM_001366386.2"/>
</dbReference>
<dbReference type="RefSeq" id="NP_631897.1">
    <molecule id="Q96Q40-4"/>
    <property type="nucleotide sequence ID" value="NM_139158.2"/>
</dbReference>
<dbReference type="RefSeq" id="XP_005246838.1">
    <property type="nucleotide sequence ID" value="XM_005246781.3"/>
</dbReference>
<dbReference type="RefSeq" id="XP_005246839.1">
    <property type="nucleotide sequence ID" value="XM_005246782.4"/>
</dbReference>
<dbReference type="SMR" id="Q96Q40"/>
<dbReference type="BioGRID" id="122381">
    <property type="interactions" value="128"/>
</dbReference>
<dbReference type="FunCoup" id="Q96Q40">
    <property type="interactions" value="1728"/>
</dbReference>
<dbReference type="IntAct" id="Q96Q40">
    <property type="interactions" value="104"/>
</dbReference>
<dbReference type="MINT" id="Q96Q40"/>
<dbReference type="STRING" id="9606.ENSP00000406472"/>
<dbReference type="BindingDB" id="Q96Q40"/>
<dbReference type="ChEMBL" id="CHEMBL5856"/>
<dbReference type="DrugBank" id="DB00171">
    <property type="generic name" value="ATP"/>
</dbReference>
<dbReference type="DrugBank" id="DB06486">
    <property type="generic name" value="Enzastaurin"/>
</dbReference>
<dbReference type="DrugBank" id="DB12010">
    <property type="generic name" value="Fostamatinib"/>
</dbReference>
<dbReference type="DrugCentral" id="Q96Q40"/>
<dbReference type="GlyGen" id="Q96Q40">
    <property type="glycosylation" value="1 site, 1 O-linked glycan (1 site)"/>
</dbReference>
<dbReference type="iPTMnet" id="Q96Q40"/>
<dbReference type="PhosphoSitePlus" id="Q96Q40"/>
<dbReference type="SwissPalm" id="Q96Q40"/>
<dbReference type="BioMuta" id="CDK15"/>
<dbReference type="DMDM" id="290457634"/>
<dbReference type="CPTAC" id="non-CPTAC-3032"/>
<dbReference type="jPOST" id="Q96Q40"/>
<dbReference type="MassIVE" id="Q96Q40"/>
<dbReference type="PaxDb" id="9606-ENSP00000406472"/>
<dbReference type="PeptideAtlas" id="Q96Q40"/>
<dbReference type="ProteomicsDB" id="29785"/>
<dbReference type="ProteomicsDB" id="77819">
    <molecule id="Q96Q40-1"/>
</dbReference>
<dbReference type="ProteomicsDB" id="77821">
    <molecule id="Q96Q40-3"/>
</dbReference>
<dbReference type="ProteomicsDB" id="77822">
    <molecule id="Q96Q40-4"/>
</dbReference>
<dbReference type="Antibodypedia" id="19940">
    <property type="antibodies" value="263 antibodies from 27 providers"/>
</dbReference>
<dbReference type="DNASU" id="65061"/>
<dbReference type="Ensembl" id="ENST00000260967.6">
    <molecule id="Q96Q40-4"/>
    <property type="protein sequence ID" value="ENSP00000260967.2"/>
    <property type="gene ID" value="ENSG00000138395.17"/>
</dbReference>
<dbReference type="Ensembl" id="ENST00000410091.7">
    <molecule id="Q96Q40-4"/>
    <property type="protein sequence ID" value="ENSP00000386901.3"/>
    <property type="gene ID" value="ENSG00000138395.17"/>
</dbReference>
<dbReference type="Ensembl" id="ENST00000434439.1">
    <molecule id="Q96Q40-3"/>
    <property type="protein sequence ID" value="ENSP00000412775.1"/>
    <property type="gene ID" value="ENSG00000138395.17"/>
</dbReference>
<dbReference type="Ensembl" id="ENST00000450471.6">
    <molecule id="Q96Q40-5"/>
    <property type="protein sequence ID" value="ENSP00000406472.2"/>
    <property type="gene ID" value="ENSG00000138395.17"/>
</dbReference>
<dbReference type="Ensembl" id="ENST00000652192.3">
    <molecule id="Q96Q40-1"/>
    <property type="protein sequence ID" value="ENSP00000498608.2"/>
    <property type="gene ID" value="ENSG00000138395.17"/>
</dbReference>
<dbReference type="GeneID" id="65061"/>
<dbReference type="KEGG" id="hsa:65061"/>
<dbReference type="MANE-Select" id="ENST00000652192.3">
    <property type="protein sequence ID" value="ENSP00000498608.2"/>
    <property type="RefSeq nucleotide sequence ID" value="NM_001366386.2"/>
    <property type="RefSeq protein sequence ID" value="NP_001353315.1"/>
</dbReference>
<dbReference type="UCSC" id="uc002uys.4">
    <molecule id="Q96Q40-1"/>
    <property type="organism name" value="human"/>
</dbReference>
<dbReference type="AGR" id="HGNC:14434"/>
<dbReference type="CTD" id="65061"/>
<dbReference type="DisGeNET" id="65061"/>
<dbReference type="GeneCards" id="CDK15"/>
<dbReference type="HGNC" id="HGNC:14434">
    <property type="gene designation" value="CDK15"/>
</dbReference>
<dbReference type="HPA" id="ENSG00000138395">
    <property type="expression patterns" value="Group enriched (epididymis, ovary)"/>
</dbReference>
<dbReference type="MIM" id="616147">
    <property type="type" value="gene"/>
</dbReference>
<dbReference type="neXtProt" id="NX_Q96Q40"/>
<dbReference type="OpenTargets" id="ENSG00000138395"/>
<dbReference type="PharmGKB" id="PA165696414"/>
<dbReference type="VEuPathDB" id="HostDB:ENSG00000138395"/>
<dbReference type="eggNOG" id="KOG0594">
    <property type="taxonomic scope" value="Eukaryota"/>
</dbReference>
<dbReference type="GeneTree" id="ENSGT00940000159606"/>
<dbReference type="HOGENOM" id="CLU_000288_181_1_1"/>
<dbReference type="InParanoid" id="Q96Q40"/>
<dbReference type="OMA" id="NPEWFLM"/>
<dbReference type="OrthoDB" id="1732493at2759"/>
<dbReference type="PAN-GO" id="Q96Q40">
    <property type="GO annotations" value="7 GO annotations based on evolutionary models"/>
</dbReference>
<dbReference type="PhylomeDB" id="Q96Q40"/>
<dbReference type="TreeFam" id="TF106508"/>
<dbReference type="BRENDA" id="2.7.11.22">
    <property type="organism ID" value="2681"/>
</dbReference>
<dbReference type="PathwayCommons" id="Q96Q40"/>
<dbReference type="SignaLink" id="Q96Q40"/>
<dbReference type="BioGRID-ORCS" id="65061">
    <property type="hits" value="11 hits in 1180 CRISPR screens"/>
</dbReference>
<dbReference type="ChiTaRS" id="CDK15">
    <property type="organism name" value="human"/>
</dbReference>
<dbReference type="GenomeRNAi" id="65061"/>
<dbReference type="Pharos" id="Q96Q40">
    <property type="development level" value="Tchem"/>
</dbReference>
<dbReference type="PRO" id="PR:Q96Q40"/>
<dbReference type="Proteomes" id="UP000005640">
    <property type="component" value="Chromosome 2"/>
</dbReference>
<dbReference type="RNAct" id="Q96Q40">
    <property type="molecule type" value="protein"/>
</dbReference>
<dbReference type="Bgee" id="ENSG00000138395">
    <property type="expression patterns" value="Expressed in corpus epididymis and 116 other cell types or tissues"/>
</dbReference>
<dbReference type="ExpressionAtlas" id="Q96Q40">
    <property type="expression patterns" value="baseline and differential"/>
</dbReference>
<dbReference type="GO" id="GO:0005737">
    <property type="term" value="C:cytoplasm"/>
    <property type="evidence" value="ECO:0000318"/>
    <property type="project" value="GO_Central"/>
</dbReference>
<dbReference type="GO" id="GO:0005829">
    <property type="term" value="C:cytosol"/>
    <property type="evidence" value="ECO:0000318"/>
    <property type="project" value="GO_Central"/>
</dbReference>
<dbReference type="GO" id="GO:0005634">
    <property type="term" value="C:nucleus"/>
    <property type="evidence" value="ECO:0000318"/>
    <property type="project" value="GO_Central"/>
</dbReference>
<dbReference type="GO" id="GO:0005524">
    <property type="term" value="F:ATP binding"/>
    <property type="evidence" value="ECO:0007669"/>
    <property type="project" value="UniProtKB-KW"/>
</dbReference>
<dbReference type="GO" id="GO:0030332">
    <property type="term" value="F:cyclin binding"/>
    <property type="evidence" value="ECO:0000318"/>
    <property type="project" value="GO_Central"/>
</dbReference>
<dbReference type="GO" id="GO:0004693">
    <property type="term" value="F:cyclin-dependent protein serine/threonine kinase activity"/>
    <property type="evidence" value="ECO:0000318"/>
    <property type="project" value="GO_Central"/>
</dbReference>
<dbReference type="GO" id="GO:0046872">
    <property type="term" value="F:metal ion binding"/>
    <property type="evidence" value="ECO:0007669"/>
    <property type="project" value="UniProtKB-KW"/>
</dbReference>
<dbReference type="GO" id="GO:0106310">
    <property type="term" value="F:protein serine kinase activity"/>
    <property type="evidence" value="ECO:0007669"/>
    <property type="project" value="RHEA"/>
</dbReference>
<dbReference type="GO" id="GO:0004674">
    <property type="term" value="F:protein serine/threonine kinase activity"/>
    <property type="evidence" value="ECO:0000314"/>
    <property type="project" value="UniProtKB"/>
</dbReference>
<dbReference type="GO" id="GO:1901987">
    <property type="term" value="P:regulation of cell cycle phase transition"/>
    <property type="evidence" value="ECO:0000318"/>
    <property type="project" value="GO_Central"/>
</dbReference>
<dbReference type="CDD" id="cd07870">
    <property type="entry name" value="STKc_PFTAIRE2"/>
    <property type="match status" value="1"/>
</dbReference>
<dbReference type="FunFam" id="1.10.510.10:FF:000131">
    <property type="entry name" value="cyclin-dependent kinase 14 isoform X1"/>
    <property type="match status" value="1"/>
</dbReference>
<dbReference type="FunFam" id="3.30.200.20:FF:000007">
    <property type="entry name" value="Cyclin-dependent kinase 14, putative"/>
    <property type="match status" value="1"/>
</dbReference>
<dbReference type="Gene3D" id="3.30.200.20">
    <property type="entry name" value="Phosphorylase Kinase, domain 1"/>
    <property type="match status" value="1"/>
</dbReference>
<dbReference type="Gene3D" id="1.10.510.10">
    <property type="entry name" value="Transferase(Phosphotransferase) domain 1"/>
    <property type="match status" value="1"/>
</dbReference>
<dbReference type="InterPro" id="IPR050108">
    <property type="entry name" value="CDK"/>
</dbReference>
<dbReference type="InterPro" id="IPR042761">
    <property type="entry name" value="CDK15_STKc"/>
</dbReference>
<dbReference type="InterPro" id="IPR011009">
    <property type="entry name" value="Kinase-like_dom_sf"/>
</dbReference>
<dbReference type="InterPro" id="IPR000719">
    <property type="entry name" value="Prot_kinase_dom"/>
</dbReference>
<dbReference type="InterPro" id="IPR017441">
    <property type="entry name" value="Protein_kinase_ATP_BS"/>
</dbReference>
<dbReference type="InterPro" id="IPR008271">
    <property type="entry name" value="Ser/Thr_kinase_AS"/>
</dbReference>
<dbReference type="PANTHER" id="PTHR24056">
    <property type="entry name" value="CELL DIVISION PROTEIN KINASE"/>
    <property type="match status" value="1"/>
</dbReference>
<dbReference type="PANTHER" id="PTHR24056:SF159">
    <property type="entry name" value="CYCLIN-DEPENDENT KINASE 15"/>
    <property type="match status" value="1"/>
</dbReference>
<dbReference type="Pfam" id="PF00069">
    <property type="entry name" value="Pkinase"/>
    <property type="match status" value="1"/>
</dbReference>
<dbReference type="SMART" id="SM00220">
    <property type="entry name" value="S_TKc"/>
    <property type="match status" value="1"/>
</dbReference>
<dbReference type="SUPFAM" id="SSF56112">
    <property type="entry name" value="Protein kinase-like (PK-like)"/>
    <property type="match status" value="1"/>
</dbReference>
<dbReference type="PROSITE" id="PS00107">
    <property type="entry name" value="PROTEIN_KINASE_ATP"/>
    <property type="match status" value="1"/>
</dbReference>
<dbReference type="PROSITE" id="PS50011">
    <property type="entry name" value="PROTEIN_KINASE_DOM"/>
    <property type="match status" value="1"/>
</dbReference>
<dbReference type="PROSITE" id="PS00108">
    <property type="entry name" value="PROTEIN_KINASE_ST"/>
    <property type="match status" value="1"/>
</dbReference>
<protein>
    <recommendedName>
        <fullName>Cyclin-dependent kinase 15</fullName>
        <ecNumber evidence="5">2.7.11.22</ecNumber>
    </recommendedName>
    <alternativeName>
        <fullName>Amyotrophic lateral sclerosis 2 chromosomal region candidate gene 7 protein</fullName>
    </alternativeName>
    <alternativeName>
        <fullName>Cell division protein kinase 15</fullName>
    </alternativeName>
    <alternativeName>
        <fullName>Serine/threonine-protein kinase ALS2CR7</fullName>
    </alternativeName>
    <alternativeName>
        <fullName>Serine/threonine-protein kinase PFTAIRE-2</fullName>
    </alternativeName>
</protein>
<keyword id="KW-0025">Alternative splicing</keyword>
<keyword id="KW-0067">ATP-binding</keyword>
<keyword id="KW-0418">Kinase</keyword>
<keyword id="KW-0460">Magnesium</keyword>
<keyword id="KW-0479">Metal-binding</keyword>
<keyword id="KW-0547">Nucleotide-binding</keyword>
<keyword id="KW-1267">Proteomics identification</keyword>
<keyword id="KW-1185">Reference proteome</keyword>
<keyword id="KW-0723">Serine/threonine-protein kinase</keyword>
<keyword id="KW-0808">Transferase</keyword>
<name>CDK15_HUMAN</name>
<proteinExistence type="evidence at protein level"/>
<organism>
    <name type="scientific">Homo sapiens</name>
    <name type="common">Human</name>
    <dbReference type="NCBI Taxonomy" id="9606"/>
    <lineage>
        <taxon>Eukaryota</taxon>
        <taxon>Metazoa</taxon>
        <taxon>Chordata</taxon>
        <taxon>Craniata</taxon>
        <taxon>Vertebrata</taxon>
        <taxon>Euteleostomi</taxon>
        <taxon>Mammalia</taxon>
        <taxon>Eutheria</taxon>
        <taxon>Euarchontoglires</taxon>
        <taxon>Primates</taxon>
        <taxon>Haplorrhini</taxon>
        <taxon>Catarrhini</taxon>
        <taxon>Hominidae</taxon>
        <taxon>Homo</taxon>
    </lineage>
</organism>
<accession>Q96Q40</accession>
<accession>A8K8R9</accession>
<accession>B8ZZX0</accession>
<accession>C9J1N8</accession>
<accession>C9K003</accession>
<accession>F8W6H8</accession>
<accession>Q4ZG86</accession>
<accession>Q53TV1</accession>
<accession>Q6ZMR9</accession>
<accession>Q8IUP1</accession>